<reference key="1">
    <citation type="journal article" date="1987" name="Nucleic Acids Res.">
        <title>Human dihydropteridine reductase: characterisation of a cDNA clone and its use in analysis of patients with dihydropteridine reductase deficiency.</title>
        <authorList>
            <person name="Dahl H.-H.M."/>
            <person name="Hutchison W."/>
            <person name="McAdam W."/>
            <person name="Wake S."/>
            <person name="Morgan F.J."/>
            <person name="Cotton R.G.H."/>
        </authorList>
    </citation>
    <scope>NUCLEOTIDE SEQUENCE [MRNA] (ISOFORM 1)</scope>
    <scope>VARIANT THR-51</scope>
</reference>
<reference key="2">
    <citation type="submission" date="1987-07" db="EMBL/GenBank/DDBJ databases">
        <authorList>
            <person name="Dahl H.-H.M."/>
        </authorList>
    </citation>
    <scope>SEQUENCE REVISION TO 51</scope>
</reference>
<reference key="3">
    <citation type="journal article" date="1987" name="Proc. Natl. Acad. Sci. U.S.A.">
        <title>Structure and expression of human dihydropteridine reductase.</title>
        <authorList>
            <person name="Lockyer J."/>
            <person name="Cook R.G."/>
            <person name="Milstien S."/>
            <person name="Kaufman S."/>
            <person name="Woo S.L.C."/>
            <person name="Ledley F.D."/>
        </authorList>
    </citation>
    <scope>NUCLEOTIDE SEQUENCE [MRNA] (ISOFORM 1)</scope>
    <scope>VARIANT THR-51</scope>
    <scope>FUNCTION</scope>
    <scope>CATALYTIC ACTIVITY</scope>
</reference>
<reference key="4">
    <citation type="journal article" date="1998" name="Hum. Mutat.">
        <title>Dihydropteridine reductase deficiency: physical structure of the QDPR gene, identification of two new mutations and genotype-phenotype correlations.</title>
        <authorList>
            <person name="Dianzani I."/>
            <person name="de Sanctis L."/>
            <person name="Smooker P.M."/>
            <person name="Gough T.J."/>
            <person name="Alliaudi C."/>
            <person name="Brusco A."/>
            <person name="Spada M."/>
            <person name="Blau N."/>
            <person name="Dobos M."/>
            <person name="Zhang H.-P."/>
            <person name="Yang N."/>
            <person name="Ponzone A."/>
            <person name="Armarego W.L.F."/>
            <person name="Cotton R.G.H."/>
        </authorList>
    </citation>
    <scope>NUCLEOTIDE SEQUENCE [GENOMIC DNA]</scope>
    <scope>VARIANT THR-51</scope>
    <scope>VARIANTS HPABH4C ASP-23; CYS-150; TYR-158 AND ILE-THR-GLY-218 INS</scope>
</reference>
<reference key="5">
    <citation type="submission" date="2000-12" db="EMBL/GenBank/DDBJ databases">
        <title>The complete sequence of human dihydropteridine reductase gene containing BAC clone 395N09.</title>
        <authorList>
            <person name="Hsiao K.-J."/>
            <person name="Yen P.-F."/>
            <person name="Lin C.-H."/>
            <person name="Liu T.-T."/>
            <person name="Chiang S.-H."/>
            <person name="Chen C.-Y."/>
            <person name="Tsai S.-F."/>
        </authorList>
    </citation>
    <scope>NUCLEOTIDE SEQUENCE [GENOMIC DNA]</scope>
</reference>
<reference key="6">
    <citation type="journal article" date="2004" name="Nat. Genet.">
        <title>Complete sequencing and characterization of 21,243 full-length human cDNAs.</title>
        <authorList>
            <person name="Ota T."/>
            <person name="Suzuki Y."/>
            <person name="Nishikawa T."/>
            <person name="Otsuki T."/>
            <person name="Sugiyama T."/>
            <person name="Irie R."/>
            <person name="Wakamatsu A."/>
            <person name="Hayashi K."/>
            <person name="Sato H."/>
            <person name="Nagai K."/>
            <person name="Kimura K."/>
            <person name="Makita H."/>
            <person name="Sekine M."/>
            <person name="Obayashi M."/>
            <person name="Nishi T."/>
            <person name="Shibahara T."/>
            <person name="Tanaka T."/>
            <person name="Ishii S."/>
            <person name="Yamamoto J."/>
            <person name="Saito K."/>
            <person name="Kawai Y."/>
            <person name="Isono Y."/>
            <person name="Nakamura Y."/>
            <person name="Nagahari K."/>
            <person name="Murakami K."/>
            <person name="Yasuda T."/>
            <person name="Iwayanagi T."/>
            <person name="Wagatsuma M."/>
            <person name="Shiratori A."/>
            <person name="Sudo H."/>
            <person name="Hosoiri T."/>
            <person name="Kaku Y."/>
            <person name="Kodaira H."/>
            <person name="Kondo H."/>
            <person name="Sugawara M."/>
            <person name="Takahashi M."/>
            <person name="Kanda K."/>
            <person name="Yokoi T."/>
            <person name="Furuya T."/>
            <person name="Kikkawa E."/>
            <person name="Omura Y."/>
            <person name="Abe K."/>
            <person name="Kamihara K."/>
            <person name="Katsuta N."/>
            <person name="Sato K."/>
            <person name="Tanikawa M."/>
            <person name="Yamazaki M."/>
            <person name="Ninomiya K."/>
            <person name="Ishibashi T."/>
            <person name="Yamashita H."/>
            <person name="Murakawa K."/>
            <person name="Fujimori K."/>
            <person name="Tanai H."/>
            <person name="Kimata M."/>
            <person name="Watanabe M."/>
            <person name="Hiraoka S."/>
            <person name="Chiba Y."/>
            <person name="Ishida S."/>
            <person name="Ono Y."/>
            <person name="Takiguchi S."/>
            <person name="Watanabe S."/>
            <person name="Yosida M."/>
            <person name="Hotuta T."/>
            <person name="Kusano J."/>
            <person name="Kanehori K."/>
            <person name="Takahashi-Fujii A."/>
            <person name="Hara H."/>
            <person name="Tanase T.-O."/>
            <person name="Nomura Y."/>
            <person name="Togiya S."/>
            <person name="Komai F."/>
            <person name="Hara R."/>
            <person name="Takeuchi K."/>
            <person name="Arita M."/>
            <person name="Imose N."/>
            <person name="Musashino K."/>
            <person name="Yuuki H."/>
            <person name="Oshima A."/>
            <person name="Sasaki N."/>
            <person name="Aotsuka S."/>
            <person name="Yoshikawa Y."/>
            <person name="Matsunawa H."/>
            <person name="Ichihara T."/>
            <person name="Shiohata N."/>
            <person name="Sano S."/>
            <person name="Moriya S."/>
            <person name="Momiyama H."/>
            <person name="Satoh N."/>
            <person name="Takami S."/>
            <person name="Terashima Y."/>
            <person name="Suzuki O."/>
            <person name="Nakagawa S."/>
            <person name="Senoh A."/>
            <person name="Mizoguchi H."/>
            <person name="Goto Y."/>
            <person name="Shimizu F."/>
            <person name="Wakebe H."/>
            <person name="Hishigaki H."/>
            <person name="Watanabe T."/>
            <person name="Sugiyama A."/>
            <person name="Takemoto M."/>
            <person name="Kawakami B."/>
            <person name="Yamazaki M."/>
            <person name="Watanabe K."/>
            <person name="Kumagai A."/>
            <person name="Itakura S."/>
            <person name="Fukuzumi Y."/>
            <person name="Fujimori Y."/>
            <person name="Komiyama M."/>
            <person name="Tashiro H."/>
            <person name="Tanigami A."/>
            <person name="Fujiwara T."/>
            <person name="Ono T."/>
            <person name="Yamada K."/>
            <person name="Fujii Y."/>
            <person name="Ozaki K."/>
            <person name="Hirao M."/>
            <person name="Ohmori Y."/>
            <person name="Kawabata A."/>
            <person name="Hikiji T."/>
            <person name="Kobatake N."/>
            <person name="Inagaki H."/>
            <person name="Ikema Y."/>
            <person name="Okamoto S."/>
            <person name="Okitani R."/>
            <person name="Kawakami T."/>
            <person name="Noguchi S."/>
            <person name="Itoh T."/>
            <person name="Shigeta K."/>
            <person name="Senba T."/>
            <person name="Matsumura K."/>
            <person name="Nakajima Y."/>
            <person name="Mizuno T."/>
            <person name="Morinaga M."/>
            <person name="Sasaki M."/>
            <person name="Togashi T."/>
            <person name="Oyama M."/>
            <person name="Hata H."/>
            <person name="Watanabe M."/>
            <person name="Komatsu T."/>
            <person name="Mizushima-Sugano J."/>
            <person name="Satoh T."/>
            <person name="Shirai Y."/>
            <person name="Takahashi Y."/>
            <person name="Nakagawa K."/>
            <person name="Okumura K."/>
            <person name="Nagase T."/>
            <person name="Nomura N."/>
            <person name="Kikuchi H."/>
            <person name="Masuho Y."/>
            <person name="Yamashita R."/>
            <person name="Nakai K."/>
            <person name="Yada T."/>
            <person name="Nakamura Y."/>
            <person name="Ohara O."/>
            <person name="Isogai T."/>
            <person name="Sugano S."/>
        </authorList>
    </citation>
    <scope>NUCLEOTIDE SEQUENCE [LARGE SCALE MRNA] (ISOFORMS 1 AND 2)</scope>
    <source>
        <tissue>Brain</tissue>
    </source>
</reference>
<reference key="7">
    <citation type="submission" date="2005-04" db="EMBL/GenBank/DDBJ databases">
        <authorList>
            <person name="Totoki Y."/>
            <person name="Toyoda A."/>
            <person name="Takeda T."/>
            <person name="Sakaki Y."/>
            <person name="Tanaka A."/>
            <person name="Yokoyama S."/>
        </authorList>
    </citation>
    <scope>NUCLEOTIDE SEQUENCE [LARGE SCALE MRNA] (ISOFORM 1)</scope>
    <source>
        <tissue>Cerebellum</tissue>
    </source>
</reference>
<reference key="8">
    <citation type="journal article" date="2005" name="Nature">
        <title>Generation and annotation of the DNA sequences of human chromosomes 2 and 4.</title>
        <authorList>
            <person name="Hillier L.W."/>
            <person name="Graves T.A."/>
            <person name="Fulton R.S."/>
            <person name="Fulton L.A."/>
            <person name="Pepin K.H."/>
            <person name="Minx P."/>
            <person name="Wagner-McPherson C."/>
            <person name="Layman D."/>
            <person name="Wylie K."/>
            <person name="Sekhon M."/>
            <person name="Becker M.C."/>
            <person name="Fewell G.A."/>
            <person name="Delehaunty K.D."/>
            <person name="Miner T.L."/>
            <person name="Nash W.E."/>
            <person name="Kremitzki C."/>
            <person name="Oddy L."/>
            <person name="Du H."/>
            <person name="Sun H."/>
            <person name="Bradshaw-Cordum H."/>
            <person name="Ali J."/>
            <person name="Carter J."/>
            <person name="Cordes M."/>
            <person name="Harris A."/>
            <person name="Isak A."/>
            <person name="van Brunt A."/>
            <person name="Nguyen C."/>
            <person name="Du F."/>
            <person name="Courtney L."/>
            <person name="Kalicki J."/>
            <person name="Ozersky P."/>
            <person name="Abbott S."/>
            <person name="Armstrong J."/>
            <person name="Belter E.A."/>
            <person name="Caruso L."/>
            <person name="Cedroni M."/>
            <person name="Cotton M."/>
            <person name="Davidson T."/>
            <person name="Desai A."/>
            <person name="Elliott G."/>
            <person name="Erb T."/>
            <person name="Fronick C."/>
            <person name="Gaige T."/>
            <person name="Haakenson W."/>
            <person name="Haglund K."/>
            <person name="Holmes A."/>
            <person name="Harkins R."/>
            <person name="Kim K."/>
            <person name="Kruchowski S.S."/>
            <person name="Strong C.M."/>
            <person name="Grewal N."/>
            <person name="Goyea E."/>
            <person name="Hou S."/>
            <person name="Levy A."/>
            <person name="Martinka S."/>
            <person name="Mead K."/>
            <person name="McLellan M.D."/>
            <person name="Meyer R."/>
            <person name="Randall-Maher J."/>
            <person name="Tomlinson C."/>
            <person name="Dauphin-Kohlberg S."/>
            <person name="Kozlowicz-Reilly A."/>
            <person name="Shah N."/>
            <person name="Swearengen-Shahid S."/>
            <person name="Snider J."/>
            <person name="Strong J.T."/>
            <person name="Thompson J."/>
            <person name="Yoakum M."/>
            <person name="Leonard S."/>
            <person name="Pearman C."/>
            <person name="Trani L."/>
            <person name="Radionenko M."/>
            <person name="Waligorski J.E."/>
            <person name="Wang C."/>
            <person name="Rock S.M."/>
            <person name="Tin-Wollam A.-M."/>
            <person name="Maupin R."/>
            <person name="Latreille P."/>
            <person name="Wendl M.C."/>
            <person name="Yang S.-P."/>
            <person name="Pohl C."/>
            <person name="Wallis J.W."/>
            <person name="Spieth J."/>
            <person name="Bieri T.A."/>
            <person name="Berkowicz N."/>
            <person name="Nelson J.O."/>
            <person name="Osborne J."/>
            <person name="Ding L."/>
            <person name="Meyer R."/>
            <person name="Sabo A."/>
            <person name="Shotland Y."/>
            <person name="Sinha P."/>
            <person name="Wohldmann P.E."/>
            <person name="Cook L.L."/>
            <person name="Hickenbotham M.T."/>
            <person name="Eldred J."/>
            <person name="Williams D."/>
            <person name="Jones T.A."/>
            <person name="She X."/>
            <person name="Ciccarelli F.D."/>
            <person name="Izaurralde E."/>
            <person name="Taylor J."/>
            <person name="Schmutz J."/>
            <person name="Myers R.M."/>
            <person name="Cox D.R."/>
            <person name="Huang X."/>
            <person name="McPherson J.D."/>
            <person name="Mardis E.R."/>
            <person name="Clifton S.W."/>
            <person name="Warren W.C."/>
            <person name="Chinwalla A.T."/>
            <person name="Eddy S.R."/>
            <person name="Marra M.A."/>
            <person name="Ovcharenko I."/>
            <person name="Furey T.S."/>
            <person name="Miller W."/>
            <person name="Eichler E.E."/>
            <person name="Bork P."/>
            <person name="Suyama M."/>
            <person name="Torrents D."/>
            <person name="Waterston R.H."/>
            <person name="Wilson R.K."/>
        </authorList>
    </citation>
    <scope>NUCLEOTIDE SEQUENCE [LARGE SCALE GENOMIC DNA]</scope>
</reference>
<reference key="9">
    <citation type="submission" date="2005-07" db="EMBL/GenBank/DDBJ databases">
        <authorList>
            <person name="Mural R.J."/>
            <person name="Istrail S."/>
            <person name="Sutton G.G."/>
            <person name="Florea L."/>
            <person name="Halpern A.L."/>
            <person name="Mobarry C.M."/>
            <person name="Lippert R."/>
            <person name="Walenz B."/>
            <person name="Shatkay H."/>
            <person name="Dew I."/>
            <person name="Miller J.R."/>
            <person name="Flanigan M.J."/>
            <person name="Edwards N.J."/>
            <person name="Bolanos R."/>
            <person name="Fasulo D."/>
            <person name="Halldorsson B.V."/>
            <person name="Hannenhalli S."/>
            <person name="Turner R."/>
            <person name="Yooseph S."/>
            <person name="Lu F."/>
            <person name="Nusskern D.R."/>
            <person name="Shue B.C."/>
            <person name="Zheng X.H."/>
            <person name="Zhong F."/>
            <person name="Delcher A.L."/>
            <person name="Huson D.H."/>
            <person name="Kravitz S.A."/>
            <person name="Mouchard L."/>
            <person name="Reinert K."/>
            <person name="Remington K.A."/>
            <person name="Clark A.G."/>
            <person name="Waterman M.S."/>
            <person name="Eichler E.E."/>
            <person name="Adams M.D."/>
            <person name="Hunkapiller M.W."/>
            <person name="Myers E.W."/>
            <person name="Venter J.C."/>
        </authorList>
    </citation>
    <scope>NUCLEOTIDE SEQUENCE [LARGE SCALE GENOMIC DNA]</scope>
</reference>
<reference key="10">
    <citation type="journal article" date="2004" name="Genome Res.">
        <title>The status, quality, and expansion of the NIH full-length cDNA project: the Mammalian Gene Collection (MGC).</title>
        <authorList>
            <consortium name="The MGC Project Team"/>
        </authorList>
    </citation>
    <scope>NUCLEOTIDE SEQUENCE [LARGE SCALE MRNA] (ISOFORM 1)</scope>
    <source>
        <tissue>Brain</tissue>
    </source>
</reference>
<reference key="11">
    <citation type="submission" date="2008-03" db="UniProtKB">
        <authorList>
            <person name="Bienvenut W.V."/>
            <person name="Heiserich L."/>
            <person name="Gottlieb E."/>
        </authorList>
    </citation>
    <scope>PROTEIN SEQUENCE OF 2-11 AND 128-138</scope>
    <scope>CLEAVAGE OF INITIATOR METHIONINE</scope>
    <scope>ACETYLATION AT ALA-2</scope>
    <scope>IDENTIFICATION BY MASS SPECTROMETRY</scope>
    <source>
        <tissue>Colon carcinoma</tissue>
    </source>
</reference>
<reference key="12">
    <citation type="journal article" date="2009" name="Anal. Chem.">
        <title>Lys-N and trypsin cover complementary parts of the phosphoproteome in a refined SCX-based approach.</title>
        <authorList>
            <person name="Gauci S."/>
            <person name="Helbig A.O."/>
            <person name="Slijper M."/>
            <person name="Krijgsveld J."/>
            <person name="Heck A.J."/>
            <person name="Mohammed S."/>
        </authorList>
    </citation>
    <scope>ACETYLATION [LARGE SCALE ANALYSIS] AT ALA-2</scope>
    <scope>CLEAVAGE OF INITIATOR METHIONINE [LARGE SCALE ANALYSIS]</scope>
    <scope>IDENTIFICATION BY MASS SPECTROMETRY [LARGE SCALE ANALYSIS]</scope>
</reference>
<reference key="13">
    <citation type="journal article" date="2011" name="BMC Syst. Biol.">
        <title>Initial characterization of the human central proteome.</title>
        <authorList>
            <person name="Burkard T.R."/>
            <person name="Planyavsky M."/>
            <person name="Kaupe I."/>
            <person name="Breitwieser F.P."/>
            <person name="Buerckstuemmer T."/>
            <person name="Bennett K.L."/>
            <person name="Superti-Furga G."/>
            <person name="Colinge J."/>
        </authorList>
    </citation>
    <scope>IDENTIFICATION BY MASS SPECTROMETRY [LARGE SCALE ANALYSIS]</scope>
</reference>
<reference key="14">
    <citation type="journal article" date="2012" name="Mol. Cell. Proteomics">
        <title>Comparative large-scale characterisation of plant vs. mammal proteins reveals similar and idiosyncratic N-alpha acetylation features.</title>
        <authorList>
            <person name="Bienvenut W.V."/>
            <person name="Sumpton D."/>
            <person name="Martinez A."/>
            <person name="Lilla S."/>
            <person name="Espagne C."/>
            <person name="Meinnel T."/>
            <person name="Giglione C."/>
        </authorList>
    </citation>
    <scope>ACETYLATION [LARGE SCALE ANALYSIS] AT ALA-2</scope>
    <scope>CLEAVAGE OF INITIATOR METHIONINE [LARGE SCALE ANALYSIS]</scope>
    <scope>IDENTIFICATION BY MASS SPECTROMETRY [LARGE SCALE ANALYSIS]</scope>
</reference>
<reference key="15">
    <citation type="journal article" date="2012" name="Proc. Natl. Acad. Sci. U.S.A.">
        <title>N-terminal acetylome analyses and functional insights of the N-terminal acetyltransferase NatB.</title>
        <authorList>
            <person name="Van Damme P."/>
            <person name="Lasa M."/>
            <person name="Polevoda B."/>
            <person name="Gazquez C."/>
            <person name="Elosegui-Artola A."/>
            <person name="Kim D.S."/>
            <person name="De Juan-Pardo E."/>
            <person name="Demeyer K."/>
            <person name="Hole K."/>
            <person name="Larrea E."/>
            <person name="Timmerman E."/>
            <person name="Prieto J."/>
            <person name="Arnesen T."/>
            <person name="Sherman F."/>
            <person name="Gevaert K."/>
            <person name="Aldabe R."/>
        </authorList>
    </citation>
    <scope>ACETYLATION [LARGE SCALE ANALYSIS] AT ALA-2</scope>
    <scope>CLEAVAGE OF INITIATOR METHIONINE [LARGE SCALE ANALYSIS]</scope>
    <scope>IDENTIFICATION BY MASS SPECTROMETRY [LARGE SCALE ANALYSIS]</scope>
</reference>
<reference key="16">
    <citation type="journal article" date="2014" name="J. Proteomics">
        <title>An enzyme assisted RP-RPLC approach for in-depth analysis of human liver phosphoproteome.</title>
        <authorList>
            <person name="Bian Y."/>
            <person name="Song C."/>
            <person name="Cheng K."/>
            <person name="Dong M."/>
            <person name="Wang F."/>
            <person name="Huang J."/>
            <person name="Sun D."/>
            <person name="Wang L."/>
            <person name="Ye M."/>
            <person name="Zou H."/>
        </authorList>
    </citation>
    <scope>IDENTIFICATION BY MASS SPECTROMETRY [LARGE SCALE ANALYSIS]</scope>
    <source>
        <tissue>Liver</tissue>
    </source>
</reference>
<reference key="17">
    <citation type="journal article" date="1993" name="J. Biol. Chem.">
        <title>The crystallographic structure of a human dihydropteridine reductase NADH binary complex expressed in Escherichia coli by a cDNA constructed from its rat homologue.</title>
        <authorList>
            <person name="Su Y."/>
            <person name="Varughese K.I."/>
            <person name="Xuong N.H."/>
            <person name="Bray T.L."/>
            <person name="Roche D.J."/>
            <person name="Whiteley J.M."/>
        </authorList>
    </citation>
    <scope>X-RAY CRYSTALLOGRAPHY (2.5 ANGSTROMS)</scope>
    <scope>FUNCTION</scope>
    <scope>CATALYTIC ACTIVITY</scope>
</reference>
<reference key="18">
    <citation type="journal article" date="1990" name="Am. J. Hum. Genet.">
        <title>Insertion of an extra codon for threonine is a cause of dihydropteridine reductase deficiency.</title>
        <authorList>
            <person name="Howells D.W."/>
            <person name="Forrest S.M."/>
            <person name="Dahl H.-H.M."/>
            <person name="Cotton R.G.H."/>
        </authorList>
    </citation>
    <scope>VARIANT HPABH4C THR-123 INS</scope>
</reference>
<reference key="19">
    <citation type="journal article" date="1992" name="Pediatr. Res.">
        <title>Atypical (mild) forms of dihydropteridine reductase deficiency: neurochemical evaluation and mutation detection.</title>
        <authorList>
            <person name="Blau N."/>
            <person name="Heizmann C.W."/>
            <person name="Sperl W."/>
            <person name="Korenke G.C."/>
            <person name="Hoffmann G.F."/>
            <person name="Smooker P.M."/>
            <person name="Cotton R.G."/>
        </authorList>
    </citation>
    <scope>VARIANT HPABH4C SER-151</scope>
</reference>
<reference key="20">
    <citation type="journal article" date="1993" name="J. Med. Genet.">
        <title>Two new mutations in the dihydropteridine reductase gene in patients with tetrahydrobiopterin deficiency.</title>
        <authorList>
            <person name="Dianzani I."/>
            <person name="Howells D.W."/>
            <person name="Ponzone A."/>
            <person name="Saleeba J.A."/>
            <person name="Smooker P.M."/>
            <person name="Cotton R.G.H."/>
        </authorList>
    </citation>
    <scope>VARIANTS HPABH4C ASP-23 AND GLY-108</scope>
</reference>
<reference key="21">
    <citation type="journal article" date="1995" name="Hum. Mutat.">
        <title>Molecular basis of dihydropteridine reductase deficiency.</title>
        <authorList>
            <person name="Smooker P.M."/>
            <person name="Cotton R.G.H."/>
        </authorList>
    </citation>
    <scope>VARIANT HPABH4C ARG-36</scope>
</reference>
<reference key="22">
    <citation type="journal article" date="1999" name="Hum. Mutat.">
        <title>A series of mutations in the dihydropteridine reductase gene resulting in either abnormal RNA splicing or DHPR protein defects.</title>
        <authorList>
            <person name="Smooker P.M."/>
            <person name="Gough T.J."/>
            <person name="Cotton R.G.H."/>
            <person name="Alliaudi C."/>
            <person name="de Sanctis L."/>
            <person name="Dianzani I."/>
        </authorList>
    </citation>
    <scope>VARIANTS HPABH4C PRO-14 AND VAL-17</scope>
</reference>
<reference key="23">
    <citation type="journal article" date="2000" name="Hum. Genet.">
        <title>Molecular analysis of 16 Turkish families with DHPR deficiency using denaturing gradient gel electrophoresis (DGGE).</title>
        <authorList>
            <person name="Romstad A."/>
            <person name="Kalkanoglu H.S."/>
            <person name="Coskun T."/>
            <person name="Demirkol M."/>
            <person name="Tokatli A."/>
            <person name="Dursun A."/>
            <person name="Baykal T."/>
            <person name="Oezalp I."/>
            <person name="Guldberg P."/>
            <person name="Guettler F."/>
        </authorList>
    </citation>
    <scope>VARIANTS HPABH4C ARG-17; ASP-18; ASP-23; ARG-66; ARG-149 AND CYS-150</scope>
</reference>
<reference key="24">
    <citation type="journal article" date="2006" name="Hum. Mutat.">
        <title>Mutations in the BH4-metabolizing genes GTP cyclohydrolase I, 6-pyruvoyl-tetrahydropterin synthase, sepiapterin reductase, carbinolamine-4a-dehydratase, and dihydropteridine reductase.</title>
        <authorList>
            <person name="Thoeny B."/>
            <person name="Blau N."/>
        </authorList>
    </citation>
    <scope>VARIANT HPABH4C PRO-74</scope>
</reference>
<accession>P09417</accession>
<accession>A8K158</accession>
<accession>B3KW71</accession>
<accession>Q53F52</accession>
<accession>Q9H3M5</accession>
<sequence length="244" mass="25790">MAAAAAAGEARRVLVYGGRGALGSRCVQAFRARNWWVASVDVVENEEASASIIVKMTDSFTEQADQVTAEVGKLLGEEKVDAILCVAGGWAGGNAKSKSLFKNCDLMWKQSIWTSTISSHLATKHLKEGGLLTLAGAKAALDGTPGMIGYGMAKGAVHQLCQSLAGKNSGMPPGAAAIAVLPVTLDTPMNRKSMPEADFSSWTPLEFLVETFHDWITGKNRPSSGSLIQVVTTEGRTELTPAYF</sequence>
<feature type="initiator methionine" description="Removed" evidence="14 18 19 20">
    <location>
        <position position="1"/>
    </location>
</feature>
<feature type="chain" id="PRO_0000054636" description="Dihydropteridine reductase">
    <location>
        <begin position="2"/>
        <end position="244"/>
    </location>
</feature>
<feature type="active site" description="Proton acceptor">
    <location>
        <position position="150"/>
    </location>
</feature>
<feature type="binding site">
    <location>
        <begin position="14"/>
        <end position="38"/>
    </location>
    <ligand>
        <name>NADP(+)</name>
        <dbReference type="ChEBI" id="CHEBI:58349"/>
    </ligand>
</feature>
<feature type="modified residue" description="N-acetylalanine" evidence="14 18 19 20">
    <location>
        <position position="2"/>
    </location>
</feature>
<feature type="modified residue" description="N6-succinyllysine" evidence="2">
    <location>
        <position position="73"/>
    </location>
</feature>
<feature type="modified residue" description="N6-succinyllysine" evidence="2">
    <location>
        <position position="79"/>
    </location>
</feature>
<feature type="modified residue" description="N6-succinyllysine" evidence="2">
    <location>
        <position position="96"/>
    </location>
</feature>
<feature type="modified residue" description="N6-succinyllysine" evidence="2">
    <location>
        <position position="102"/>
    </location>
</feature>
<feature type="splice variant" id="VSP_054356" description="In isoform 2." evidence="15">
    <location>
        <begin position="36"/>
        <end position="66"/>
    </location>
</feature>
<feature type="sequence variant" id="VAR_008121" description="In HPABH4C; severe; dbSNP:rs756639609." evidence="3">
    <original>L</original>
    <variation>P</variation>
    <location>
        <position position="14"/>
    </location>
</feature>
<feature type="sequence variant" id="VAR_021767" description="In HPABH4C; severe; dbSNP:rs757483045." evidence="4">
    <original>G</original>
    <variation>R</variation>
    <location>
        <position position="17"/>
    </location>
</feature>
<feature type="sequence variant" id="VAR_008122" description="In HPABH4C; severe." evidence="3">
    <original>G</original>
    <variation>V</variation>
    <location>
        <position position="17"/>
    </location>
</feature>
<feature type="sequence variant" id="VAR_021768" description="In HPABH4C; severe; dbSNP:rs1278371188." evidence="4">
    <original>G</original>
    <variation>D</variation>
    <location>
        <position position="18"/>
    </location>
</feature>
<feature type="sequence variant" id="VAR_006960" description="In HPABH4C; severe; dbSNP:rs104893863." evidence="4 12 13">
    <original>G</original>
    <variation>D</variation>
    <location>
        <position position="23"/>
    </location>
</feature>
<feature type="sequence variant" id="VAR_006961" description="In HPABH4C; dbSNP:rs104893865." evidence="10">
    <original>W</original>
    <variation>R</variation>
    <location>
        <position position="36"/>
    </location>
</feature>
<feature type="sequence variant" id="VAR_013027" evidence="8 9 13">
    <original>S</original>
    <variation>T</variation>
    <location>
        <position position="51"/>
    </location>
</feature>
<feature type="sequence variant" id="VAR_021769" description="In HPABH4C; severe; dbSNP:rs1252488251." evidence="4">
    <original>Q</original>
    <variation>R</variation>
    <location>
        <position position="66"/>
    </location>
</feature>
<feature type="sequence variant" id="VAR_006962" description="In HPABH4C; dbSNP:rs1158304986." evidence="6">
    <original>L</original>
    <variation>P</variation>
    <location>
        <position position="74"/>
    </location>
</feature>
<feature type="sequence variant" id="VAR_006963" description="In HPABH4C; dbSNP:rs104893864." evidence="12">
    <original>W</original>
    <variation>G</variation>
    <location>
        <position position="108"/>
    </location>
</feature>
<feature type="sequence variant" id="VAR_006964" description="In HPABH4C." evidence="7">
    <original>T</original>
    <variation>TT</variation>
    <location>
        <position position="123"/>
    </location>
</feature>
<feature type="sequence variant" id="VAR_006965" description="In HPABH4C; dbSNP:rs1560312943.">
    <original>P</original>
    <variation>L</variation>
    <location>
        <position position="145"/>
    </location>
</feature>
<feature type="sequence variant" id="VAR_021770" description="In HPABH4C; dbSNP:rs1028029163." evidence="4">
    <original>G</original>
    <variation>R</variation>
    <location>
        <position position="149"/>
    </location>
</feature>
<feature type="sequence variant" id="VAR_006966" description="In HPABH4C; mild; dbSNP:rs104893866." evidence="4 13">
    <original>Y</original>
    <variation>C</variation>
    <location>
        <position position="150"/>
    </location>
</feature>
<feature type="sequence variant" id="VAR_006967" description="In HPABH4C; mild; dbSNP:rs1718196012." evidence="5">
    <original>G</original>
    <variation>S</variation>
    <location>
        <position position="151"/>
    </location>
</feature>
<feature type="sequence variant" id="VAR_006968" description="In HPABH4C; severe; dbSNP:rs750201480." evidence="13">
    <original>H</original>
    <variation>Y</variation>
    <location>
        <position position="158"/>
    </location>
</feature>
<feature type="sequence variant" id="VAR_006969" description="In HPABH4C; dbSNP:rs769460415.">
    <original>G</original>
    <variation>S</variation>
    <location>
        <position position="170"/>
    </location>
</feature>
<feature type="sequence variant" id="VAR_006970" description="In HPABH4C; mild; dbSNP:rs777797545.">
    <original>F</original>
    <variation>C</variation>
    <location>
        <position position="212"/>
    </location>
</feature>
<feature type="sequence variant" id="VAR_006971" description="In HPABH4C; mild.">
    <original>G</original>
    <variation>GITG</variation>
    <location>
        <position position="218"/>
    </location>
</feature>
<feature type="strand" evidence="21">
    <location>
        <begin position="11"/>
        <end position="16"/>
    </location>
</feature>
<feature type="turn" evidence="21">
    <location>
        <begin position="17"/>
        <end position="19"/>
    </location>
</feature>
<feature type="helix" evidence="21">
    <location>
        <begin position="21"/>
        <end position="32"/>
    </location>
</feature>
<feature type="strand" evidence="21">
    <location>
        <begin position="36"/>
        <end position="43"/>
    </location>
</feature>
<feature type="strand" evidence="21">
    <location>
        <begin position="48"/>
        <end position="53"/>
    </location>
</feature>
<feature type="helix" evidence="21">
    <location>
        <begin position="60"/>
        <end position="75"/>
    </location>
</feature>
<feature type="strand" evidence="21">
    <location>
        <begin position="80"/>
        <end position="85"/>
    </location>
</feature>
<feature type="helix" evidence="21">
    <location>
        <begin position="100"/>
        <end position="110"/>
    </location>
</feature>
<feature type="helix" evidence="21">
    <location>
        <begin position="112"/>
        <end position="125"/>
    </location>
</feature>
<feature type="strand" evidence="21">
    <location>
        <begin position="126"/>
        <end position="135"/>
    </location>
</feature>
<feature type="helix" evidence="21">
    <location>
        <begin position="138"/>
        <end position="141"/>
    </location>
</feature>
<feature type="helix" evidence="21">
    <location>
        <begin position="148"/>
        <end position="165"/>
    </location>
</feature>
<feature type="strand" evidence="21">
    <location>
        <begin position="176"/>
        <end position="181"/>
    </location>
</feature>
<feature type="helix" evidence="21">
    <location>
        <begin position="188"/>
        <end position="191"/>
    </location>
</feature>
<feature type="helix" evidence="21">
    <location>
        <begin position="199"/>
        <end position="201"/>
    </location>
</feature>
<feature type="helix" evidence="21">
    <location>
        <begin position="205"/>
        <end position="216"/>
    </location>
</feature>
<feature type="turn" evidence="21">
    <location>
        <begin position="217"/>
        <end position="220"/>
    </location>
</feature>
<feature type="strand" evidence="21">
    <location>
        <begin position="227"/>
        <end position="233"/>
    </location>
</feature>
<feature type="strand" evidence="21">
    <location>
        <begin position="236"/>
        <end position="242"/>
    </location>
</feature>
<dbReference type="EC" id="1.5.1.34" evidence="9 11"/>
<dbReference type="EMBL" id="X04882">
    <property type="protein sequence ID" value="CAA28571.1"/>
    <property type="molecule type" value="mRNA"/>
</dbReference>
<dbReference type="EMBL" id="M16447">
    <property type="protein sequence ID" value="AAA52305.1"/>
    <property type="molecule type" value="mRNA"/>
</dbReference>
<dbReference type="EMBL" id="AJ006239">
    <property type="protein sequence ID" value="CAA06930.1"/>
    <property type="molecule type" value="Genomic_DNA"/>
</dbReference>
<dbReference type="EMBL" id="AJ006240">
    <property type="protein sequence ID" value="CAA06930.1"/>
    <property type="status" value="JOINED"/>
    <property type="molecule type" value="Genomic_DNA"/>
</dbReference>
<dbReference type="EMBL" id="AJ006241">
    <property type="protein sequence ID" value="CAA06930.1"/>
    <property type="status" value="JOINED"/>
    <property type="molecule type" value="Genomic_DNA"/>
</dbReference>
<dbReference type="EMBL" id="AJ006242">
    <property type="protein sequence ID" value="CAA06930.1"/>
    <property type="status" value="JOINED"/>
    <property type="molecule type" value="Genomic_DNA"/>
</dbReference>
<dbReference type="EMBL" id="AJ006243">
    <property type="protein sequence ID" value="CAA06930.1"/>
    <property type="status" value="JOINED"/>
    <property type="molecule type" value="Genomic_DNA"/>
</dbReference>
<dbReference type="EMBL" id="AJ006244">
    <property type="protein sequence ID" value="CAA06930.1"/>
    <property type="status" value="JOINED"/>
    <property type="molecule type" value="Genomic_DNA"/>
</dbReference>
<dbReference type="EMBL" id="AJ006245">
    <property type="protein sequence ID" value="CAA06930.1"/>
    <property type="status" value="JOINED"/>
    <property type="molecule type" value="Genomic_DNA"/>
</dbReference>
<dbReference type="EMBL" id="AB053170">
    <property type="protein sequence ID" value="BAB20429.1"/>
    <property type="molecule type" value="Genomic_DNA"/>
</dbReference>
<dbReference type="EMBL" id="AK124382">
    <property type="protein sequence ID" value="BAG54033.1"/>
    <property type="molecule type" value="mRNA"/>
</dbReference>
<dbReference type="EMBL" id="AK289773">
    <property type="protein sequence ID" value="BAF82462.1"/>
    <property type="molecule type" value="mRNA"/>
</dbReference>
<dbReference type="EMBL" id="AK223437">
    <property type="protein sequence ID" value="BAD97157.1"/>
    <property type="molecule type" value="mRNA"/>
</dbReference>
<dbReference type="EMBL" id="AC093600">
    <property type="status" value="NOT_ANNOTATED_CDS"/>
    <property type="molecule type" value="Genomic_DNA"/>
</dbReference>
<dbReference type="EMBL" id="CH471069">
    <property type="protein sequence ID" value="EAW92777.1"/>
    <property type="molecule type" value="Genomic_DNA"/>
</dbReference>
<dbReference type="EMBL" id="CH471069">
    <property type="protein sequence ID" value="EAW92778.1"/>
    <property type="molecule type" value="Genomic_DNA"/>
</dbReference>
<dbReference type="EMBL" id="BC000576">
    <property type="protein sequence ID" value="AAH00576.1"/>
    <property type="molecule type" value="mRNA"/>
</dbReference>
<dbReference type="CCDS" id="CCDS3421.1">
    <molecule id="P09417-1"/>
</dbReference>
<dbReference type="CCDS" id="CCDS77904.1">
    <molecule id="P09417-2"/>
</dbReference>
<dbReference type="PIR" id="A93655">
    <property type="entry name" value="RDHUP"/>
</dbReference>
<dbReference type="RefSeq" id="NP_000311.2">
    <molecule id="P09417-1"/>
    <property type="nucleotide sequence ID" value="NM_000320.3"/>
</dbReference>
<dbReference type="RefSeq" id="NP_001293069.1">
    <molecule id="P09417-2"/>
    <property type="nucleotide sequence ID" value="NM_001306140.2"/>
</dbReference>
<dbReference type="PDB" id="1HDR">
    <property type="method" value="X-ray"/>
    <property type="resolution" value="2.50 A"/>
    <property type="chains" value="A=1-244"/>
</dbReference>
<dbReference type="PDBsum" id="1HDR"/>
<dbReference type="SMR" id="P09417"/>
<dbReference type="BioGRID" id="111798">
    <property type="interactions" value="41"/>
</dbReference>
<dbReference type="FunCoup" id="P09417">
    <property type="interactions" value="868"/>
</dbReference>
<dbReference type="IntAct" id="P09417">
    <property type="interactions" value="16"/>
</dbReference>
<dbReference type="MINT" id="P09417"/>
<dbReference type="STRING" id="9606.ENSP00000281243"/>
<dbReference type="BindingDB" id="P09417"/>
<dbReference type="ChEMBL" id="CHEMBL3730"/>
<dbReference type="DrugBank" id="DB03814">
    <property type="generic name" value="2-(N-morpholino)ethanesulfonic acid"/>
</dbReference>
<dbReference type="DrugBank" id="DB00157">
    <property type="generic name" value="NADH"/>
</dbReference>
<dbReference type="GlyGen" id="P09417">
    <property type="glycosylation" value="1 site, 1 O-linked glycan (1 site)"/>
</dbReference>
<dbReference type="iPTMnet" id="P09417"/>
<dbReference type="MetOSite" id="P09417"/>
<dbReference type="PhosphoSitePlus" id="P09417"/>
<dbReference type="SwissPalm" id="P09417"/>
<dbReference type="BioMuta" id="QDPR"/>
<dbReference type="DMDM" id="118572639"/>
<dbReference type="REPRODUCTION-2DPAGE" id="IPI00014439"/>
<dbReference type="jPOST" id="P09417"/>
<dbReference type="MassIVE" id="P09417"/>
<dbReference type="PaxDb" id="9606-ENSP00000281243"/>
<dbReference type="PeptideAtlas" id="P09417"/>
<dbReference type="ProteomicsDB" id="3780"/>
<dbReference type="ProteomicsDB" id="52216">
    <molecule id="P09417-1"/>
</dbReference>
<dbReference type="Pumba" id="P09417"/>
<dbReference type="Antibodypedia" id="23074">
    <property type="antibodies" value="217 antibodies from 30 providers"/>
</dbReference>
<dbReference type="DNASU" id="5860"/>
<dbReference type="Ensembl" id="ENST00000281243.10">
    <molecule id="P09417-1"/>
    <property type="protein sequence ID" value="ENSP00000281243.5"/>
    <property type="gene ID" value="ENSG00000151552.13"/>
</dbReference>
<dbReference type="Ensembl" id="ENST00000428702.6">
    <molecule id="P09417-2"/>
    <property type="protein sequence ID" value="ENSP00000390944.2"/>
    <property type="gene ID" value="ENSG00000151552.13"/>
</dbReference>
<dbReference type="GeneID" id="5860"/>
<dbReference type="KEGG" id="hsa:5860"/>
<dbReference type="MANE-Select" id="ENST00000281243.10">
    <property type="protein sequence ID" value="ENSP00000281243.5"/>
    <property type="RefSeq nucleotide sequence ID" value="NM_000320.3"/>
    <property type="RefSeq protein sequence ID" value="NP_000311.2"/>
</dbReference>
<dbReference type="UCSC" id="uc003gpd.4">
    <molecule id="P09417-1"/>
    <property type="organism name" value="human"/>
</dbReference>
<dbReference type="AGR" id="HGNC:9752"/>
<dbReference type="CTD" id="5860"/>
<dbReference type="DisGeNET" id="5860"/>
<dbReference type="GeneCards" id="QDPR"/>
<dbReference type="HGNC" id="HGNC:9752">
    <property type="gene designation" value="QDPR"/>
</dbReference>
<dbReference type="HPA" id="ENSG00000151552">
    <property type="expression patterns" value="Group enriched (brain, liver)"/>
</dbReference>
<dbReference type="MalaCards" id="QDPR"/>
<dbReference type="MIM" id="261630">
    <property type="type" value="phenotype"/>
</dbReference>
<dbReference type="MIM" id="612676">
    <property type="type" value="gene"/>
</dbReference>
<dbReference type="neXtProt" id="NX_P09417"/>
<dbReference type="OpenTargets" id="ENSG00000151552"/>
<dbReference type="Orphanet" id="226">
    <property type="disease" value="Dihydropteridine reductase deficiency"/>
</dbReference>
<dbReference type="PharmGKB" id="PA34094"/>
<dbReference type="VEuPathDB" id="HostDB:ENSG00000151552"/>
<dbReference type="eggNOG" id="KOG4022">
    <property type="taxonomic scope" value="Eukaryota"/>
</dbReference>
<dbReference type="GeneTree" id="ENSGT00390000000470"/>
<dbReference type="HOGENOM" id="CLU_010194_22_0_1"/>
<dbReference type="InParanoid" id="P09417"/>
<dbReference type="OMA" id="KNYWVGS"/>
<dbReference type="OrthoDB" id="1204at2759"/>
<dbReference type="PAN-GO" id="P09417">
    <property type="GO annotations" value="6 GO annotations based on evolutionary models"/>
</dbReference>
<dbReference type="PhylomeDB" id="P09417"/>
<dbReference type="TreeFam" id="TF105932"/>
<dbReference type="BioCyc" id="MetaCyc:HS07746-MONOMER"/>
<dbReference type="BRENDA" id="1.5.1.34">
    <property type="organism ID" value="2681"/>
</dbReference>
<dbReference type="PathwayCommons" id="P09417"/>
<dbReference type="Reactome" id="R-HSA-8964208">
    <property type="pathway name" value="Phenylalanine metabolism"/>
</dbReference>
<dbReference type="SABIO-RK" id="P09417"/>
<dbReference type="SignaLink" id="P09417"/>
<dbReference type="BioGRID-ORCS" id="5860">
    <property type="hits" value="13 hits in 1165 CRISPR screens"/>
</dbReference>
<dbReference type="CD-CODE" id="FB4E32DD">
    <property type="entry name" value="Presynaptic clusters and postsynaptic densities"/>
</dbReference>
<dbReference type="ChiTaRS" id="QDPR">
    <property type="organism name" value="human"/>
</dbReference>
<dbReference type="EvolutionaryTrace" id="P09417"/>
<dbReference type="GeneWiki" id="QDPR"/>
<dbReference type="GenomeRNAi" id="5860"/>
<dbReference type="Pharos" id="P09417">
    <property type="development level" value="Tchem"/>
</dbReference>
<dbReference type="PRO" id="PR:P09417"/>
<dbReference type="Proteomes" id="UP000005640">
    <property type="component" value="Chromosome 4"/>
</dbReference>
<dbReference type="RNAct" id="P09417">
    <property type="molecule type" value="protein"/>
</dbReference>
<dbReference type="Bgee" id="ENSG00000151552">
    <property type="expression patterns" value="Expressed in inferior vagus X ganglion and 198 other cell types or tissues"/>
</dbReference>
<dbReference type="ExpressionAtlas" id="P09417">
    <property type="expression patterns" value="baseline and differential"/>
</dbReference>
<dbReference type="GO" id="GO:0005737">
    <property type="term" value="C:cytoplasm"/>
    <property type="evidence" value="ECO:0000314"/>
    <property type="project" value="LIFEdb"/>
</dbReference>
<dbReference type="GO" id="GO:0005829">
    <property type="term" value="C:cytosol"/>
    <property type="evidence" value="ECO:0000304"/>
    <property type="project" value="Reactome"/>
</dbReference>
<dbReference type="GO" id="GO:0070062">
    <property type="term" value="C:extracellular exosome"/>
    <property type="evidence" value="ECO:0007005"/>
    <property type="project" value="UniProtKB"/>
</dbReference>
<dbReference type="GO" id="GO:0005739">
    <property type="term" value="C:mitochondrion"/>
    <property type="evidence" value="ECO:0006056"/>
    <property type="project" value="FlyBase"/>
</dbReference>
<dbReference type="GO" id="GO:0004155">
    <property type="term" value="F:6,7-dihydropteridine reductase activity"/>
    <property type="evidence" value="ECO:0000314"/>
    <property type="project" value="UniProtKB"/>
</dbReference>
<dbReference type="GO" id="GO:0009055">
    <property type="term" value="F:electron transfer activity"/>
    <property type="evidence" value="ECO:0000304"/>
    <property type="project" value="UniProtKB"/>
</dbReference>
<dbReference type="GO" id="GO:0070404">
    <property type="term" value="F:NADH binding"/>
    <property type="evidence" value="ECO:0000318"/>
    <property type="project" value="GO_Central"/>
</dbReference>
<dbReference type="GO" id="GO:0070402">
    <property type="term" value="F:NADPH binding"/>
    <property type="evidence" value="ECO:0000318"/>
    <property type="project" value="GO_Central"/>
</dbReference>
<dbReference type="GO" id="GO:0006520">
    <property type="term" value="P:amino acid metabolic process"/>
    <property type="evidence" value="ECO:0000304"/>
    <property type="project" value="ProtInc"/>
</dbReference>
<dbReference type="GO" id="GO:0051066">
    <property type="term" value="P:dihydrobiopterin metabolic process"/>
    <property type="evidence" value="ECO:0000304"/>
    <property type="project" value="ProtInc"/>
</dbReference>
<dbReference type="GO" id="GO:0006559">
    <property type="term" value="P:L-phenylalanine catabolic process"/>
    <property type="evidence" value="ECO:0000318"/>
    <property type="project" value="GO_Central"/>
</dbReference>
<dbReference type="GO" id="GO:0006729">
    <property type="term" value="P:tetrahydrobiopterin biosynthetic process"/>
    <property type="evidence" value="ECO:0000318"/>
    <property type="project" value="GO_Central"/>
</dbReference>
<dbReference type="CDD" id="cd05334">
    <property type="entry name" value="DHPR_SDR_c_like"/>
    <property type="match status" value="1"/>
</dbReference>
<dbReference type="FunFam" id="3.40.50.720:FF:000157">
    <property type="entry name" value="Quinoid dihydropteridine reductase"/>
    <property type="match status" value="1"/>
</dbReference>
<dbReference type="Gene3D" id="3.40.50.720">
    <property type="entry name" value="NAD(P)-binding Rossmann-like Domain"/>
    <property type="match status" value="1"/>
</dbReference>
<dbReference type="InterPro" id="IPR036291">
    <property type="entry name" value="NAD(P)-bd_dom_sf"/>
</dbReference>
<dbReference type="InterPro" id="IPR020904">
    <property type="entry name" value="Sc_DH/Rdtase_CS"/>
</dbReference>
<dbReference type="InterPro" id="IPR002347">
    <property type="entry name" value="SDR_fam"/>
</dbReference>
<dbReference type="PANTHER" id="PTHR15104">
    <property type="entry name" value="DIHYDROPTERIDINE REDUCTASE"/>
    <property type="match status" value="1"/>
</dbReference>
<dbReference type="PANTHER" id="PTHR15104:SF0">
    <property type="entry name" value="DIHYDROPTERIDINE REDUCTASE"/>
    <property type="match status" value="1"/>
</dbReference>
<dbReference type="Pfam" id="PF00106">
    <property type="entry name" value="adh_short"/>
    <property type="match status" value="1"/>
</dbReference>
<dbReference type="SUPFAM" id="SSF51735">
    <property type="entry name" value="NAD(P)-binding Rossmann-fold domains"/>
    <property type="match status" value="1"/>
</dbReference>
<dbReference type="PROSITE" id="PS00061">
    <property type="entry name" value="ADH_SHORT"/>
    <property type="match status" value="1"/>
</dbReference>
<proteinExistence type="evidence at protein level"/>
<protein>
    <recommendedName>
        <fullName>Dihydropteridine reductase</fullName>
        <ecNumber evidence="9 11">1.5.1.34</ecNumber>
    </recommendedName>
    <alternativeName>
        <fullName>HDHPR</fullName>
    </alternativeName>
    <alternativeName>
        <fullName>Quinoid dihydropteridine reductase</fullName>
    </alternativeName>
    <alternativeName>
        <fullName>Short chain dehydrogenase/reductase family 33C member 1</fullName>
    </alternativeName>
</protein>
<organism>
    <name type="scientific">Homo sapiens</name>
    <name type="common">Human</name>
    <dbReference type="NCBI Taxonomy" id="9606"/>
    <lineage>
        <taxon>Eukaryota</taxon>
        <taxon>Metazoa</taxon>
        <taxon>Chordata</taxon>
        <taxon>Craniata</taxon>
        <taxon>Vertebrata</taxon>
        <taxon>Euteleostomi</taxon>
        <taxon>Mammalia</taxon>
        <taxon>Eutheria</taxon>
        <taxon>Euarchontoglires</taxon>
        <taxon>Primates</taxon>
        <taxon>Haplorrhini</taxon>
        <taxon>Catarrhini</taxon>
        <taxon>Hominidae</taxon>
        <taxon>Homo</taxon>
    </lineage>
</organism>
<keyword id="KW-0002">3D-structure</keyword>
<keyword id="KW-0007">Acetylation</keyword>
<keyword id="KW-0025">Alternative splicing</keyword>
<keyword id="KW-0903">Direct protein sequencing</keyword>
<keyword id="KW-0225">Disease variant</keyword>
<keyword id="KW-0521">NADP</keyword>
<keyword id="KW-0560">Oxidoreductase</keyword>
<keyword id="KW-0586">Phenylketonuria</keyword>
<keyword id="KW-1267">Proteomics identification</keyword>
<keyword id="KW-1185">Reference proteome</keyword>
<keyword id="KW-0783">Tetrahydrobiopterin biosynthesis</keyword>
<comment type="function">
    <text evidence="9 11">Catalyzes the conversion of quinonoid dihydrobiopterin into tetrahydrobiopterin.</text>
</comment>
<comment type="catalytic activity">
    <reaction evidence="9 11">
        <text>5,6,7,8-tetrahydropteridine + NAD(+) = 6,7-dihydropteridine + NADH + H(+)</text>
        <dbReference type="Rhea" id="RHEA:17869"/>
        <dbReference type="ChEBI" id="CHEBI:15378"/>
        <dbReference type="ChEBI" id="CHEBI:28889"/>
        <dbReference type="ChEBI" id="CHEBI:30156"/>
        <dbReference type="ChEBI" id="CHEBI:57540"/>
        <dbReference type="ChEBI" id="CHEBI:57945"/>
        <dbReference type="EC" id="1.5.1.34"/>
    </reaction>
    <physiologicalReaction direction="right-to-left" evidence="17">
        <dbReference type="Rhea" id="RHEA:17871"/>
    </physiologicalReaction>
</comment>
<comment type="catalytic activity">
    <reaction evidence="9 11">
        <text>5,6,7,8-tetrahydropteridine + NADP(+) = 6,7-dihydropteridine + NADPH + H(+)</text>
        <dbReference type="Rhea" id="RHEA:17865"/>
        <dbReference type="ChEBI" id="CHEBI:15378"/>
        <dbReference type="ChEBI" id="CHEBI:28889"/>
        <dbReference type="ChEBI" id="CHEBI:30156"/>
        <dbReference type="ChEBI" id="CHEBI:57783"/>
        <dbReference type="ChEBI" id="CHEBI:58349"/>
        <dbReference type="EC" id="1.5.1.34"/>
    </reaction>
    <physiologicalReaction direction="right-to-left" evidence="17">
        <dbReference type="Rhea" id="RHEA:17867"/>
    </physiologicalReaction>
</comment>
<comment type="subunit">
    <text evidence="1">Homodimer.</text>
</comment>
<comment type="alternative products">
    <event type="alternative splicing"/>
    <isoform>
        <id>P09417-1</id>
        <name>1</name>
        <sequence type="displayed"/>
    </isoform>
    <isoform>
        <id>P09417-2</id>
        <name>2</name>
        <sequence type="described" ref="VSP_054356"/>
    </isoform>
</comment>
<comment type="disease" evidence="3 4 5 6 7 10 12 13">
    <disease id="DI-01278">
        <name>Hyperphenylalaninemia, BH4-deficient, C</name>
        <acronym>HPABH4C</acronym>
        <description>Rare autosomal recessive disorder characterized by hyperphenylalaninemia and severe neurologic symptoms (malignant hyperphenylalaninemia) including axial hypotonia and truncal hypertonia, abnormal thermogenesis, and microcephaly. These signs are attributable to depletion of the neurotransmitters dopamine and serotonin, whose syntheses are controlled by tryptophan and tyrosine hydroxylases that use BH-4 as cofactor. Patients do not respond to phenylalanine-restricted diet. HPABH4C is lethal if untreated.</description>
        <dbReference type="MIM" id="261630"/>
    </disease>
    <text>The disease is caused by variants affecting the gene represented in this entry.</text>
</comment>
<comment type="similarity">
    <text evidence="16">Belongs to the short-chain dehydrogenases/reductases (SDR) family.</text>
</comment>
<evidence type="ECO:0000250" key="1">
    <source>
        <dbReference type="UniProtKB" id="P11348"/>
    </source>
</evidence>
<evidence type="ECO:0000250" key="2">
    <source>
        <dbReference type="UniProtKB" id="Q8BVI4"/>
    </source>
</evidence>
<evidence type="ECO:0000269" key="3">
    <source>
    </source>
</evidence>
<evidence type="ECO:0000269" key="4">
    <source>
    </source>
</evidence>
<evidence type="ECO:0000269" key="5">
    <source>
    </source>
</evidence>
<evidence type="ECO:0000269" key="6">
    <source>
    </source>
</evidence>
<evidence type="ECO:0000269" key="7">
    <source>
    </source>
</evidence>
<evidence type="ECO:0000269" key="8">
    <source>
    </source>
</evidence>
<evidence type="ECO:0000269" key="9">
    <source>
    </source>
</evidence>
<evidence type="ECO:0000269" key="10">
    <source>
    </source>
</evidence>
<evidence type="ECO:0000269" key="11">
    <source>
    </source>
</evidence>
<evidence type="ECO:0000269" key="12">
    <source>
    </source>
</evidence>
<evidence type="ECO:0000269" key="13">
    <source>
    </source>
</evidence>
<evidence type="ECO:0000269" key="14">
    <source ref="11"/>
</evidence>
<evidence type="ECO:0000303" key="15">
    <source>
    </source>
</evidence>
<evidence type="ECO:0000305" key="16"/>
<evidence type="ECO:0000305" key="17">
    <source>
    </source>
</evidence>
<evidence type="ECO:0007744" key="18">
    <source>
    </source>
</evidence>
<evidence type="ECO:0007744" key="19">
    <source>
    </source>
</evidence>
<evidence type="ECO:0007744" key="20">
    <source>
    </source>
</evidence>
<evidence type="ECO:0007829" key="21">
    <source>
        <dbReference type="PDB" id="1HDR"/>
    </source>
</evidence>
<gene>
    <name type="primary">QDPR</name>
    <name type="synonym">DHPR</name>
    <name type="synonym">SDR33C1</name>
</gene>
<name>DHPR_HUMAN</name>